<sequence>MNNPWSNFSSAFGCPIQIPKQNSNVPPSLPVPVGVFGVPLRSGCSNQMAFCAPELTDRKPEHEQKVSKRLNDREEDKDEAAACSLDNQYDRKIQPCIDLVDSLRKLDIGNDLMLPAIAVIGDRNSGKSSVLEALSGVALPRDKGVITRCPLELKLKKMTAPQEWKGVIYYRNTEIQLQNASEVKKAIRKAQDIVAGTNGSISGELISLEIWSPDVPDLTLIDLPGIAREAVGNQPQDNGQQIKTLLKKYIGCKETIIVVVVPCNVDIATTEALKMAQEVDPTGERTLGVLTKPDLVNEGTEETVLKIIQNEVIPLRKGYMIVKCYGQMDFCNELSFTSAIQQEREFFETHKHFSTLLDENKATIPHLANKLTDELVGRIIKTLPAIEKQVHDALQQAKKELQKYTQSTHPTVSDKTIFLVGLIKAFNEDISQTMHGKESWFGNEIRLFPKIRREFRTWGVKLLESSAKVEEIVCSKLPKYEDQYRGREFPDFISYWTFEDIIKEQITKLEEPAVAMLNKVIYMVEEKFLQLANKRFANFQNLNNAAQARIGCISDRQATTAKNCILTQFKMERIIYCQDNIYADDLKAARAEGISKDTKIKDLAFGCASRQCPSFALEMVSHVKAYFTGASKRLSNQIPLIILSTVLHDFGNYLQTSMLHLLQGKEEINYLLQEDHEAANQQKLLTSRISHLNKAYQYLVDFKSL</sequence>
<reference key="1">
    <citation type="journal article" date="1995" name="J. Interferon Cytokine Res.">
        <title>The interferon-induced Mx protein of chickens lacks antiviral activity.</title>
        <authorList>
            <person name="Bernasconi D."/>
            <person name="Schultz U."/>
            <person name="Staeheli P."/>
        </authorList>
    </citation>
    <scope>NUCLEOTIDE SEQUENCE [MRNA]</scope>
    <source>
        <strain>White leghorn</strain>
    </source>
</reference>
<reference key="2">
    <citation type="submission" date="2002-07" db="EMBL/GenBank/DDBJ databases">
        <title>Transcription activities and antiviral effects of chicken Mx genes induced from the various MHC haplotype chickens.</title>
        <authorList>
            <person name="Chang K.S."/>
            <person name="Ohashi K."/>
            <person name="Onuma M."/>
        </authorList>
    </citation>
    <scope>NUCLEOTIDE SEQUENCE [MRNA]</scope>
    <source>
        <strain>Black Minorca</strain>
        <strain>Fayoumi GSP</strain>
        <strain>WL-F</strain>
        <strain>WL-N</strain>
    </source>
</reference>
<reference key="3">
    <citation type="submission" date="2005-12" db="EMBL/GenBank/DDBJ databases">
        <title>Clone and expression of the Mx of WuJi.</title>
        <authorList>
            <person name="Ding Y.L."/>
            <person name="Xia C."/>
        </authorList>
    </citation>
    <scope>NUCLEOTIDE SEQUENCE [MRNA]</scope>
    <source>
        <strain>Black-bone</strain>
    </source>
</reference>
<reference key="4">
    <citation type="submission" date="2006-06" db="EMBL/GenBank/DDBJ databases">
        <title>Genomic structure and variation of chicken MX gene.</title>
        <authorList>
            <person name="Li X.Y."/>
            <person name="Qu L.J."/>
            <person name="Yao J.F."/>
            <person name="Hou Z.C."/>
            <person name="Yang N."/>
        </authorList>
    </citation>
    <scope>NUCLEOTIDE SEQUENCE [GENOMIC DNA]</scope>
    <source>
        <strain>16</strain>
        <strain>17</strain>
        <strain>25</strain>
        <strain>7</strain>
    </source>
</reference>
<evidence type="ECO:0000255" key="1"/>
<evidence type="ECO:0000255" key="2">
    <source>
        <dbReference type="PROSITE-ProRule" id="PRU00720"/>
    </source>
</evidence>
<evidence type="ECO:0000255" key="3">
    <source>
        <dbReference type="PROSITE-ProRule" id="PRU01055"/>
    </source>
</evidence>
<evidence type="ECO:0000256" key="4">
    <source>
        <dbReference type="SAM" id="MobiDB-lite"/>
    </source>
</evidence>
<comment type="function">
    <text>Does not show activity against influenza virus, VSV, Thogoto virus or Sendai virus.</text>
</comment>
<comment type="subcellular location">
    <subcellularLocation>
        <location>Cytoplasm</location>
    </subcellularLocation>
</comment>
<comment type="induction">
    <text>By interferons.</text>
</comment>
<comment type="similarity">
    <text evidence="3">Belongs to the TRAFAC class dynamin-like GTPase superfamily. Dynamin/Fzo/YdjA family.</text>
</comment>
<name>MX_CHICK</name>
<dbReference type="EMBL" id="Z23168">
    <property type="protein sequence ID" value="CAA80686.1"/>
    <property type="molecule type" value="mRNA"/>
</dbReference>
<dbReference type="EMBL" id="AB088533">
    <property type="protein sequence ID" value="BAC06346.1"/>
    <property type="molecule type" value="mRNA"/>
</dbReference>
<dbReference type="EMBL" id="AB088534">
    <property type="protein sequence ID" value="BAC06347.1"/>
    <property type="molecule type" value="mRNA"/>
</dbReference>
<dbReference type="EMBL" id="AB088535">
    <property type="protein sequence ID" value="BAC06348.1"/>
    <property type="molecule type" value="mRNA"/>
</dbReference>
<dbReference type="EMBL" id="AB088536">
    <property type="protein sequence ID" value="BAC06349.1"/>
    <property type="molecule type" value="mRNA"/>
</dbReference>
<dbReference type="EMBL" id="AB244818">
    <property type="protein sequence ID" value="BAF30836.1"/>
    <property type="molecule type" value="mRNA"/>
</dbReference>
<dbReference type="EMBL" id="DQ788613">
    <property type="protein sequence ID" value="ABH07788.1"/>
    <property type="molecule type" value="Genomic_DNA"/>
</dbReference>
<dbReference type="EMBL" id="DQ788614">
    <property type="protein sequence ID" value="ABH07789.1"/>
    <property type="molecule type" value="Genomic_DNA"/>
</dbReference>
<dbReference type="EMBL" id="DQ788615">
    <property type="protein sequence ID" value="ABH07790.1"/>
    <property type="molecule type" value="Genomic_DNA"/>
</dbReference>
<dbReference type="EMBL" id="DQ788616">
    <property type="protein sequence ID" value="ABH07791.1"/>
    <property type="molecule type" value="Genomic_DNA"/>
</dbReference>
<dbReference type="PIR" id="S34155">
    <property type="entry name" value="S34155"/>
</dbReference>
<dbReference type="RefSeq" id="NP_989940.1">
    <property type="nucleotide sequence ID" value="NM_204609.1"/>
</dbReference>
<dbReference type="SMR" id="Q90597"/>
<dbReference type="FunCoup" id="Q90597">
    <property type="interactions" value="1"/>
</dbReference>
<dbReference type="STRING" id="9031.ENSGALP00000025952"/>
<dbReference type="PaxDb" id="9031-ENSGALP00000025952"/>
<dbReference type="GeneID" id="395313"/>
<dbReference type="KEGG" id="gga:395313"/>
<dbReference type="CTD" id="4599"/>
<dbReference type="VEuPathDB" id="HostDB:geneid_395313"/>
<dbReference type="eggNOG" id="KOG0446">
    <property type="taxonomic scope" value="Eukaryota"/>
</dbReference>
<dbReference type="InParanoid" id="Q90597"/>
<dbReference type="OrthoDB" id="5061070at2759"/>
<dbReference type="PhylomeDB" id="Q90597"/>
<dbReference type="PRO" id="PR:Q90597"/>
<dbReference type="Proteomes" id="UP000000539">
    <property type="component" value="Unassembled WGS sequence"/>
</dbReference>
<dbReference type="GO" id="GO:0005737">
    <property type="term" value="C:cytoplasm"/>
    <property type="evidence" value="ECO:0000318"/>
    <property type="project" value="GO_Central"/>
</dbReference>
<dbReference type="GO" id="GO:0005874">
    <property type="term" value="C:microtubule"/>
    <property type="evidence" value="ECO:0000318"/>
    <property type="project" value="GO_Central"/>
</dbReference>
<dbReference type="GO" id="GO:0005634">
    <property type="term" value="C:nucleus"/>
    <property type="evidence" value="ECO:0000318"/>
    <property type="project" value="GO_Central"/>
</dbReference>
<dbReference type="GO" id="GO:0005886">
    <property type="term" value="C:plasma membrane"/>
    <property type="evidence" value="ECO:0000318"/>
    <property type="project" value="GO_Central"/>
</dbReference>
<dbReference type="GO" id="GO:0098793">
    <property type="term" value="C:presynapse"/>
    <property type="evidence" value="ECO:0007669"/>
    <property type="project" value="GOC"/>
</dbReference>
<dbReference type="GO" id="GO:0045202">
    <property type="term" value="C:synapse"/>
    <property type="evidence" value="ECO:0000318"/>
    <property type="project" value="GO_Central"/>
</dbReference>
<dbReference type="GO" id="GO:0005525">
    <property type="term" value="F:GTP binding"/>
    <property type="evidence" value="ECO:0007669"/>
    <property type="project" value="UniProtKB-KW"/>
</dbReference>
<dbReference type="GO" id="GO:0003924">
    <property type="term" value="F:GTPase activity"/>
    <property type="evidence" value="ECO:0000318"/>
    <property type="project" value="GO_Central"/>
</dbReference>
<dbReference type="GO" id="GO:0008017">
    <property type="term" value="F:microtubule binding"/>
    <property type="evidence" value="ECO:0000318"/>
    <property type="project" value="GO_Central"/>
</dbReference>
<dbReference type="GO" id="GO:0051607">
    <property type="term" value="P:defense response to virus"/>
    <property type="evidence" value="ECO:0000318"/>
    <property type="project" value="GO_Central"/>
</dbReference>
<dbReference type="GO" id="GO:0031623">
    <property type="term" value="P:receptor internalization"/>
    <property type="evidence" value="ECO:0000318"/>
    <property type="project" value="GO_Central"/>
</dbReference>
<dbReference type="GO" id="GO:0016185">
    <property type="term" value="P:synaptic vesicle budding from presynaptic endocytic zone membrane"/>
    <property type="evidence" value="ECO:0000318"/>
    <property type="project" value="GO_Central"/>
</dbReference>
<dbReference type="CDD" id="cd08771">
    <property type="entry name" value="DLP_1"/>
    <property type="match status" value="1"/>
</dbReference>
<dbReference type="FunFam" id="1.20.120.1240:FF:000007">
    <property type="entry name" value="Interferon-induced GTP-binding protein Mx1"/>
    <property type="match status" value="1"/>
</dbReference>
<dbReference type="FunFam" id="3.40.50.300:FF:000621">
    <property type="entry name" value="Interferon-induced GTP-binding protein Mx1"/>
    <property type="match status" value="1"/>
</dbReference>
<dbReference type="Gene3D" id="1.20.120.1240">
    <property type="entry name" value="Dynamin, middle domain"/>
    <property type="match status" value="1"/>
</dbReference>
<dbReference type="Gene3D" id="3.40.50.300">
    <property type="entry name" value="P-loop containing nucleotide triphosphate hydrolases"/>
    <property type="match status" value="1"/>
</dbReference>
<dbReference type="InterPro" id="IPR022812">
    <property type="entry name" value="Dynamin"/>
</dbReference>
<dbReference type="InterPro" id="IPR001401">
    <property type="entry name" value="Dynamin_GTPase"/>
</dbReference>
<dbReference type="InterPro" id="IPR019762">
    <property type="entry name" value="Dynamin_GTPase_CS"/>
</dbReference>
<dbReference type="InterPro" id="IPR045063">
    <property type="entry name" value="Dynamin_N"/>
</dbReference>
<dbReference type="InterPro" id="IPR000375">
    <property type="entry name" value="Dynamin_stalk"/>
</dbReference>
<dbReference type="InterPro" id="IPR030381">
    <property type="entry name" value="G_DYNAMIN_dom"/>
</dbReference>
<dbReference type="InterPro" id="IPR003130">
    <property type="entry name" value="GED"/>
</dbReference>
<dbReference type="InterPro" id="IPR020850">
    <property type="entry name" value="GED_dom"/>
</dbReference>
<dbReference type="InterPro" id="IPR027417">
    <property type="entry name" value="P-loop_NTPase"/>
</dbReference>
<dbReference type="PANTHER" id="PTHR11566">
    <property type="entry name" value="DYNAMIN"/>
    <property type="match status" value="1"/>
</dbReference>
<dbReference type="PANTHER" id="PTHR11566:SF231">
    <property type="entry name" value="INTERFERON-INDUCED GTP-BINDING PROTEIN MX"/>
    <property type="match status" value="1"/>
</dbReference>
<dbReference type="Pfam" id="PF01031">
    <property type="entry name" value="Dynamin_M"/>
    <property type="match status" value="1"/>
</dbReference>
<dbReference type="Pfam" id="PF00350">
    <property type="entry name" value="Dynamin_N"/>
    <property type="match status" value="1"/>
</dbReference>
<dbReference type="Pfam" id="PF02212">
    <property type="entry name" value="GED"/>
    <property type="match status" value="1"/>
</dbReference>
<dbReference type="PRINTS" id="PR00195">
    <property type="entry name" value="DYNAMIN"/>
</dbReference>
<dbReference type="SMART" id="SM00053">
    <property type="entry name" value="DYNc"/>
    <property type="match status" value="1"/>
</dbReference>
<dbReference type="SMART" id="SM00302">
    <property type="entry name" value="GED"/>
    <property type="match status" value="1"/>
</dbReference>
<dbReference type="SUPFAM" id="SSF52540">
    <property type="entry name" value="P-loop containing nucleoside triphosphate hydrolases"/>
    <property type="match status" value="1"/>
</dbReference>
<dbReference type="PROSITE" id="PS00410">
    <property type="entry name" value="G_DYNAMIN_1"/>
    <property type="match status" value="1"/>
</dbReference>
<dbReference type="PROSITE" id="PS51718">
    <property type="entry name" value="G_DYNAMIN_2"/>
    <property type="match status" value="1"/>
</dbReference>
<dbReference type="PROSITE" id="PS51388">
    <property type="entry name" value="GED"/>
    <property type="match status" value="1"/>
</dbReference>
<gene>
    <name type="primary">MX</name>
</gene>
<feature type="chain" id="PRO_0000206603" description="Interferon-induced GTP-binding protein Mx">
    <location>
        <begin position="1"/>
        <end position="705"/>
    </location>
</feature>
<feature type="domain" description="Dynamin-type G" evidence="3">
    <location>
        <begin position="111"/>
        <end position="384"/>
    </location>
</feature>
<feature type="domain" description="GED" evidence="2">
    <location>
        <begin position="616"/>
        <end position="705"/>
    </location>
</feature>
<feature type="region of interest" description="Disordered" evidence="4">
    <location>
        <begin position="60"/>
        <end position="79"/>
    </location>
</feature>
<feature type="region of interest" description="G1 motif" evidence="3">
    <location>
        <begin position="121"/>
        <end position="128"/>
    </location>
</feature>
<feature type="region of interest" description="G2 motif" evidence="3">
    <location>
        <begin position="146"/>
        <end position="148"/>
    </location>
</feature>
<feature type="region of interest" description="G3 motif" evidence="3">
    <location>
        <begin position="222"/>
        <end position="225"/>
    </location>
</feature>
<feature type="region of interest" description="G4 motif" evidence="3">
    <location>
        <begin position="291"/>
        <end position="294"/>
    </location>
</feature>
<feature type="region of interest" description="G5 motif" evidence="3">
    <location>
        <begin position="323"/>
        <end position="326"/>
    </location>
</feature>
<feature type="compositionally biased region" description="Basic and acidic residues" evidence="4">
    <location>
        <begin position="60"/>
        <end position="74"/>
    </location>
</feature>
<feature type="binding site" evidence="1">
    <location>
        <begin position="121"/>
        <end position="128"/>
    </location>
    <ligand>
        <name>GTP</name>
        <dbReference type="ChEBI" id="CHEBI:37565"/>
    </ligand>
</feature>
<feature type="binding site" evidence="1">
    <location>
        <begin position="222"/>
        <end position="226"/>
    </location>
    <ligand>
        <name>GTP</name>
        <dbReference type="ChEBI" id="CHEBI:37565"/>
    </ligand>
</feature>
<feature type="binding site" evidence="1">
    <location>
        <begin position="291"/>
        <end position="294"/>
    </location>
    <ligand>
        <name>GTP</name>
        <dbReference type="ChEBI" id="CHEBI:37565"/>
    </ligand>
</feature>
<feature type="sequence variant" description="In strain: 16, 17, 25, 7, Black Minorca, Fayoumi GSP, WL-F and WL-N.">
    <original>W</original>
    <variation>R</variation>
    <location>
        <position position="5"/>
    </location>
</feature>
<feature type="sequence variant" description="In strain: Black-bone.">
    <original>F</original>
    <variation>S</variation>
    <location>
        <position position="8"/>
    </location>
</feature>
<feature type="sequence variant" description="In strain: 25, Black Minorca, Fayoumi GSP and WL-F.">
    <original>Q</original>
    <variation>R</variation>
    <location>
        <position position="21"/>
    </location>
</feature>
<feature type="sequence variant" description="In strain: 16, 17, 25, Black Minorca, Fayoumi GSP and WL-F.">
    <original>R</original>
    <variation>P</variation>
    <location>
        <position position="41"/>
    </location>
</feature>
<feature type="sequence variant" description="In strain: 16, 17, 25, Black Minorca, Fayoumi GSP and WL-F.">
    <original>S</original>
    <variation>L</variation>
    <location>
        <position position="42"/>
    </location>
</feature>
<feature type="sequence variant" description="In strain: WL-N.">
    <original>D</original>
    <variation>N</variation>
    <location>
        <position position="72"/>
    </location>
</feature>
<feature type="sequence variant" description="In strain: WL-N.">
    <original>S</original>
    <variation>N</variation>
    <location>
        <position position="84"/>
    </location>
</feature>
<feature type="sequence variant" description="In strain: 16, 17, 25, 7, Black-bone, Black Minorca, Fayoumi GSP, WL-F and WL-N.">
    <original>Q</original>
    <variation>R</variation>
    <location>
        <position position="94"/>
    </location>
</feature>
<feature type="sequence variant" description="In strain: WL-F.">
    <original>K</original>
    <variation>E</variation>
    <location>
        <position position="143"/>
    </location>
</feature>
<feature type="sequence variant" description="In strain: WL-F.">
    <original>E</original>
    <variation>K</variation>
    <location>
        <position position="152"/>
    </location>
</feature>
<feature type="sequence variant" description="In strain: WL-N.">
    <original>M</original>
    <variation>V</variation>
    <location>
        <position position="158"/>
    </location>
</feature>
<feature type="sequence variant" description="In strain: 16, 17.">
    <original>S</original>
    <variation>T</variation>
    <location>
        <position position="202"/>
    </location>
</feature>
<feature type="sequence variant" description="In strain: 25, 7, Black-bone, Black Minorca, Fayoumi GSP, WL-F and WL-N.">
    <original>I</original>
    <variation>V</variation>
    <location>
        <position position="308"/>
    </location>
</feature>
<feature type="sequence variant" description="In strain: WL-F.">
    <original>K</original>
    <variation>E</variation>
    <location>
        <position position="317"/>
    </location>
</feature>
<feature type="sequence variant" description="In strain: 25, 7, Black-bone, Black Minorca, Fayoumi GSP, WL-F and WL-N.">
    <original>A</original>
    <variation>T</variation>
    <location>
        <position position="339"/>
    </location>
</feature>
<feature type="sequence variant" description="In strain: WL-N.">
    <original>H</original>
    <variation>R</variation>
    <location>
        <position position="352"/>
    </location>
</feature>
<feature type="sequence variant" description="In strain: Black-bone.">
    <original>G</original>
    <variation>E</variation>
    <location>
        <position position="377"/>
    </location>
</feature>
<feature type="sequence variant" description="In strain: Black Minorca and Fayoumi GSP.">
    <original>Q</original>
    <variation>R</variation>
    <location>
        <position position="505"/>
    </location>
</feature>
<feature type="sequence variant" description="In strain: Black-bone.">
    <original>Q</original>
    <variation>R</variation>
    <location>
        <position position="530"/>
    </location>
</feature>
<feature type="sequence variant" description="In strain: 25, WL-F and WL-N.">
    <original>A</original>
    <variation>V</variation>
    <location>
        <position position="548"/>
    </location>
</feature>
<feature type="sequence variant" description="In strain: 16, 17, 25, 7, Black-bone, Black Minorca, Fayoumi GSP, WL-F and WL-N.">
    <original>A</original>
    <variation>T</variation>
    <location>
        <position position="583"/>
    </location>
</feature>
<feature type="sequence variant" description="In strain: 25, Black-bone, WL-F and WL-N.">
    <original>S</original>
    <variation>N</variation>
    <location>
        <position position="631"/>
    </location>
</feature>
<proteinExistence type="evidence at transcript level"/>
<organism>
    <name type="scientific">Gallus gallus</name>
    <name type="common">Chicken</name>
    <dbReference type="NCBI Taxonomy" id="9031"/>
    <lineage>
        <taxon>Eukaryota</taxon>
        <taxon>Metazoa</taxon>
        <taxon>Chordata</taxon>
        <taxon>Craniata</taxon>
        <taxon>Vertebrata</taxon>
        <taxon>Euteleostomi</taxon>
        <taxon>Archelosauria</taxon>
        <taxon>Archosauria</taxon>
        <taxon>Dinosauria</taxon>
        <taxon>Saurischia</taxon>
        <taxon>Theropoda</taxon>
        <taxon>Coelurosauria</taxon>
        <taxon>Aves</taxon>
        <taxon>Neognathae</taxon>
        <taxon>Galloanserae</taxon>
        <taxon>Galliformes</taxon>
        <taxon>Phasianidae</taxon>
        <taxon>Phasianinae</taxon>
        <taxon>Gallus</taxon>
    </lineage>
</organism>
<accession>Q90597</accession>
<accession>Q0KKN7</accession>
<accession>Q0PMS3</accession>
<accession>Q0PMS4</accession>
<accession>Q0PMS5</accession>
<accession>Q0PMS6</accession>
<accession>Q8JFB6</accession>
<accession>Q8JIF6</accession>
<accession>Q8JIF7</accession>
<keyword id="KW-0963">Cytoplasm</keyword>
<keyword id="KW-0342">GTP-binding</keyword>
<keyword id="KW-0547">Nucleotide-binding</keyword>
<keyword id="KW-1185">Reference proteome</keyword>
<protein>
    <recommendedName>
        <fullName>Interferon-induced GTP-binding protein Mx</fullName>
    </recommendedName>
    <alternativeName>
        <fullName>Interferon-inducible Mx protein</fullName>
    </alternativeName>
</protein>